<proteinExistence type="inferred from homology"/>
<accession>Q28PV7</accession>
<evidence type="ECO:0000255" key="1">
    <source>
        <dbReference type="HAMAP-Rule" id="MF_00258"/>
    </source>
</evidence>
<comment type="function">
    <text evidence="1">Provides the (R)-glutamate required for cell wall biosynthesis.</text>
</comment>
<comment type="catalytic activity">
    <reaction evidence="1">
        <text>L-glutamate = D-glutamate</text>
        <dbReference type="Rhea" id="RHEA:12813"/>
        <dbReference type="ChEBI" id="CHEBI:29985"/>
        <dbReference type="ChEBI" id="CHEBI:29986"/>
        <dbReference type="EC" id="5.1.1.3"/>
    </reaction>
</comment>
<comment type="pathway">
    <text evidence="1">Cell wall biogenesis; peptidoglycan biosynthesis.</text>
</comment>
<comment type="similarity">
    <text evidence="1">Belongs to the aspartate/glutamate racemases family.</text>
</comment>
<sequence length="270" mass="28994">MAVGIFDSGLGGLTVLDAVTKALPDVPLIYMGDNAHTPYGVREADDIYDLTTAGVQHLFDRGCDLVILACNTASAAALRRMQEGWVPEGKRVLGVFVPLIEALTERQWGDNSPPREVDVKEVALFATPTTVSSRAFQRELAFRAIGVDVEAQPCGGVVDAIEDGDMILAEALVRSHVDALKRRMPNPQAAILGCTHYPLVEDVFRAALGDGVAVFSQPSLVADSLGDYLKRRPEMLGSGEPAFLTTGDPKSVEAKATIFLRRKITFEAVG</sequence>
<keyword id="KW-0133">Cell shape</keyword>
<keyword id="KW-0961">Cell wall biogenesis/degradation</keyword>
<keyword id="KW-0413">Isomerase</keyword>
<keyword id="KW-0573">Peptidoglycan synthesis</keyword>
<keyword id="KW-1185">Reference proteome</keyword>
<protein>
    <recommendedName>
        <fullName evidence="1">Glutamate racemase</fullName>
        <ecNumber evidence="1">5.1.1.3</ecNumber>
    </recommendedName>
</protein>
<gene>
    <name evidence="1" type="primary">murI</name>
    <name type="ordered locus">Jann_2338</name>
</gene>
<reference key="1">
    <citation type="submission" date="2006-02" db="EMBL/GenBank/DDBJ databases">
        <title>Complete sequence of chromosome of Jannaschia sp. CCS1.</title>
        <authorList>
            <consortium name="US DOE Joint Genome Institute"/>
            <person name="Copeland A."/>
            <person name="Lucas S."/>
            <person name="Lapidus A."/>
            <person name="Barry K."/>
            <person name="Detter J.C."/>
            <person name="Glavina del Rio T."/>
            <person name="Hammon N."/>
            <person name="Israni S."/>
            <person name="Pitluck S."/>
            <person name="Brettin T."/>
            <person name="Bruce D."/>
            <person name="Han C."/>
            <person name="Tapia R."/>
            <person name="Gilna P."/>
            <person name="Chertkov O."/>
            <person name="Saunders E."/>
            <person name="Schmutz J."/>
            <person name="Larimer F."/>
            <person name="Land M."/>
            <person name="Kyrpides N."/>
            <person name="Lykidis A."/>
            <person name="Moran M.A."/>
            <person name="Belas R."/>
            <person name="Ye W."/>
            <person name="Buchan A."/>
            <person name="Gonzalez J.M."/>
            <person name="Schell M.A."/>
            <person name="Richardson P."/>
        </authorList>
    </citation>
    <scope>NUCLEOTIDE SEQUENCE [LARGE SCALE GENOMIC DNA]</scope>
    <source>
        <strain>CCS1</strain>
    </source>
</reference>
<dbReference type="EC" id="5.1.1.3" evidence="1"/>
<dbReference type="EMBL" id="CP000264">
    <property type="protein sequence ID" value="ABD55255.1"/>
    <property type="molecule type" value="Genomic_DNA"/>
</dbReference>
<dbReference type="RefSeq" id="WP_011455459.1">
    <property type="nucleotide sequence ID" value="NC_007802.1"/>
</dbReference>
<dbReference type="SMR" id="Q28PV7"/>
<dbReference type="STRING" id="290400.Jann_2338"/>
<dbReference type="KEGG" id="jan:Jann_2338"/>
<dbReference type="eggNOG" id="COG0796">
    <property type="taxonomic scope" value="Bacteria"/>
</dbReference>
<dbReference type="HOGENOM" id="CLU_052344_0_3_5"/>
<dbReference type="OrthoDB" id="9801055at2"/>
<dbReference type="UniPathway" id="UPA00219"/>
<dbReference type="Proteomes" id="UP000008326">
    <property type="component" value="Chromosome"/>
</dbReference>
<dbReference type="GO" id="GO:0008881">
    <property type="term" value="F:glutamate racemase activity"/>
    <property type="evidence" value="ECO:0007669"/>
    <property type="project" value="UniProtKB-UniRule"/>
</dbReference>
<dbReference type="GO" id="GO:0071555">
    <property type="term" value="P:cell wall organization"/>
    <property type="evidence" value="ECO:0007669"/>
    <property type="project" value="UniProtKB-KW"/>
</dbReference>
<dbReference type="GO" id="GO:0009252">
    <property type="term" value="P:peptidoglycan biosynthetic process"/>
    <property type="evidence" value="ECO:0007669"/>
    <property type="project" value="UniProtKB-UniRule"/>
</dbReference>
<dbReference type="GO" id="GO:0008360">
    <property type="term" value="P:regulation of cell shape"/>
    <property type="evidence" value="ECO:0007669"/>
    <property type="project" value="UniProtKB-KW"/>
</dbReference>
<dbReference type="Gene3D" id="3.40.50.1860">
    <property type="match status" value="2"/>
</dbReference>
<dbReference type="HAMAP" id="MF_00258">
    <property type="entry name" value="Glu_racemase"/>
    <property type="match status" value="1"/>
</dbReference>
<dbReference type="InterPro" id="IPR015942">
    <property type="entry name" value="Asp/Glu/hydantoin_racemase"/>
</dbReference>
<dbReference type="InterPro" id="IPR001920">
    <property type="entry name" value="Asp/Glu_race"/>
</dbReference>
<dbReference type="InterPro" id="IPR018187">
    <property type="entry name" value="Asp/Glu_racemase_AS_1"/>
</dbReference>
<dbReference type="InterPro" id="IPR004391">
    <property type="entry name" value="Glu_race"/>
</dbReference>
<dbReference type="PANTHER" id="PTHR21198">
    <property type="entry name" value="GLUTAMATE RACEMASE"/>
    <property type="match status" value="1"/>
</dbReference>
<dbReference type="PANTHER" id="PTHR21198:SF2">
    <property type="entry name" value="GLUTAMATE RACEMASE"/>
    <property type="match status" value="1"/>
</dbReference>
<dbReference type="Pfam" id="PF01177">
    <property type="entry name" value="Asp_Glu_race"/>
    <property type="match status" value="1"/>
</dbReference>
<dbReference type="SUPFAM" id="SSF53681">
    <property type="entry name" value="Aspartate/glutamate racemase"/>
    <property type="match status" value="2"/>
</dbReference>
<dbReference type="PROSITE" id="PS00923">
    <property type="entry name" value="ASP_GLU_RACEMASE_1"/>
    <property type="match status" value="1"/>
</dbReference>
<name>MURI_JANSC</name>
<feature type="chain" id="PRO_1000078561" description="Glutamate racemase">
    <location>
        <begin position="1"/>
        <end position="270"/>
    </location>
</feature>
<feature type="active site" description="Proton donor/acceptor" evidence="1">
    <location>
        <position position="70"/>
    </location>
</feature>
<feature type="active site" description="Proton donor/acceptor" evidence="1">
    <location>
        <position position="194"/>
    </location>
</feature>
<feature type="binding site" evidence="1">
    <location>
        <begin position="7"/>
        <end position="8"/>
    </location>
    <ligand>
        <name>substrate</name>
    </ligand>
</feature>
<feature type="binding site" evidence="1">
    <location>
        <begin position="39"/>
        <end position="40"/>
    </location>
    <ligand>
        <name>substrate</name>
    </ligand>
</feature>
<feature type="binding site" evidence="1">
    <location>
        <begin position="71"/>
        <end position="72"/>
    </location>
    <ligand>
        <name>substrate</name>
    </ligand>
</feature>
<feature type="binding site" evidence="1">
    <location>
        <begin position="195"/>
        <end position="196"/>
    </location>
    <ligand>
        <name>substrate</name>
    </ligand>
</feature>
<organism>
    <name type="scientific">Jannaschia sp. (strain CCS1)</name>
    <dbReference type="NCBI Taxonomy" id="290400"/>
    <lineage>
        <taxon>Bacteria</taxon>
        <taxon>Pseudomonadati</taxon>
        <taxon>Pseudomonadota</taxon>
        <taxon>Alphaproteobacteria</taxon>
        <taxon>Rhodobacterales</taxon>
        <taxon>Roseobacteraceae</taxon>
        <taxon>Jannaschia</taxon>
    </lineage>
</organism>